<comment type="function">
    <text evidence="1">Catalyzes the isomerization between 2-isopropylmalate and 3-isopropylmalate, via the formation of 2-isopropylmaleate.</text>
</comment>
<comment type="catalytic activity">
    <reaction evidence="1">
        <text>(2R,3S)-3-isopropylmalate = (2S)-2-isopropylmalate</text>
        <dbReference type="Rhea" id="RHEA:32287"/>
        <dbReference type="ChEBI" id="CHEBI:1178"/>
        <dbReference type="ChEBI" id="CHEBI:35121"/>
        <dbReference type="EC" id="4.2.1.33"/>
    </reaction>
</comment>
<comment type="cofactor">
    <cofactor evidence="1">
        <name>[4Fe-4S] cluster</name>
        <dbReference type="ChEBI" id="CHEBI:49883"/>
    </cofactor>
    <text evidence="1">Binds 1 [4Fe-4S] cluster per subunit.</text>
</comment>
<comment type="pathway">
    <text evidence="1">Amino-acid biosynthesis; L-leucine biosynthesis; L-leucine from 3-methyl-2-oxobutanoate: step 2/4.</text>
</comment>
<comment type="subunit">
    <text evidence="1">Heterodimer of LeuC and LeuD.</text>
</comment>
<comment type="similarity">
    <text evidence="1">Belongs to the aconitase/IPM isomerase family. LeuC type 1 subfamily.</text>
</comment>
<name>LEUC_BUCUM</name>
<dbReference type="EC" id="4.2.1.33" evidence="1"/>
<dbReference type="EMBL" id="AF197454">
    <property type="protein sequence ID" value="AAG31397.1"/>
    <property type="molecule type" value="Genomic_DNA"/>
</dbReference>
<dbReference type="EMBL" id="AF196404">
    <property type="protein sequence ID" value="AAK21726.1"/>
    <property type="molecule type" value="Genomic_DNA"/>
</dbReference>
<dbReference type="EMBL" id="AF196407">
    <property type="protein sequence ID" value="AAK21731.1"/>
    <property type="molecule type" value="Genomic_DNA"/>
</dbReference>
<dbReference type="EMBL" id="AF196408">
    <property type="protein sequence ID" value="AAK21733.1"/>
    <property type="molecule type" value="Genomic_DNA"/>
</dbReference>
<dbReference type="EMBL" id="AF196409">
    <property type="protein sequence ID" value="AAK21735.1"/>
    <property type="molecule type" value="Genomic_DNA"/>
</dbReference>
<dbReference type="EMBL" id="AF196410">
    <property type="protein sequence ID" value="AAK21737.1"/>
    <property type="molecule type" value="Genomic_DNA"/>
</dbReference>
<dbReference type="EMBL" id="AF196412">
    <property type="protein sequence ID" value="AAK21741.1"/>
    <property type="molecule type" value="Genomic_DNA"/>
</dbReference>
<dbReference type="EMBL" id="AF196413">
    <property type="protein sequence ID" value="AAK21743.1"/>
    <property type="molecule type" value="Genomic_DNA"/>
</dbReference>
<dbReference type="EMBL" id="AF196414">
    <property type="protein sequence ID" value="AAK21745.1"/>
    <property type="molecule type" value="Genomic_DNA"/>
</dbReference>
<dbReference type="EMBL" id="AF196415">
    <property type="protein sequence ID" value="AAK21747.1"/>
    <property type="molecule type" value="Genomic_DNA"/>
</dbReference>
<dbReference type="EMBL" id="AF196417">
    <property type="protein sequence ID" value="AAK21751.1"/>
    <property type="molecule type" value="Genomic_DNA"/>
</dbReference>
<dbReference type="EMBL" id="AF196418">
    <property type="protein sequence ID" value="AAK21753.1"/>
    <property type="molecule type" value="Genomic_DNA"/>
</dbReference>
<dbReference type="EMBL" id="AF196419">
    <property type="protein sequence ID" value="AAK21755.1"/>
    <property type="molecule type" value="Genomic_DNA"/>
</dbReference>
<dbReference type="EMBL" id="AF196420">
    <property type="protein sequence ID" value="AAK21757.1"/>
    <property type="molecule type" value="Genomic_DNA"/>
</dbReference>
<dbReference type="EMBL" id="AF196421">
    <property type="protein sequence ID" value="AAK21759.1"/>
    <property type="molecule type" value="Genomic_DNA"/>
</dbReference>
<dbReference type="EMBL" id="AF196422">
    <property type="protein sequence ID" value="AAK21761.1"/>
    <property type="molecule type" value="Genomic_DNA"/>
</dbReference>
<dbReference type="EMBL" id="AF196423">
    <property type="protein sequence ID" value="AAK21763.1"/>
    <property type="molecule type" value="Genomic_DNA"/>
</dbReference>
<dbReference type="EMBL" id="AF196424">
    <property type="protein sequence ID" value="AAK21765.1"/>
    <property type="molecule type" value="Genomic_DNA"/>
</dbReference>
<dbReference type="EMBL" id="AF196402">
    <property type="protein sequence ID" value="AAK21723.1"/>
    <property type="molecule type" value="Genomic_DNA"/>
</dbReference>
<dbReference type="EMBL" id="AF196406">
    <property type="protein sequence ID" value="AAK21729.1"/>
    <property type="molecule type" value="Genomic_DNA"/>
</dbReference>
<dbReference type="EMBL" id="AF196416">
    <property type="protein sequence ID" value="AAK21749.1"/>
    <property type="molecule type" value="Genomic_DNA"/>
</dbReference>
<dbReference type="EMBL" id="AF196425">
    <property type="protein sequence ID" value="AAK21767.1"/>
    <property type="molecule type" value="Genomic_DNA"/>
</dbReference>
<dbReference type="EMBL" id="AF196411">
    <property type="protein sequence ID" value="AAK21739.1"/>
    <property type="molecule type" value="Genomic_DNA"/>
</dbReference>
<dbReference type="SMR" id="Q9EVG8"/>
<dbReference type="UniPathway" id="UPA00048">
    <property type="reaction ID" value="UER00071"/>
</dbReference>
<dbReference type="GO" id="GO:0003861">
    <property type="term" value="F:3-isopropylmalate dehydratase activity"/>
    <property type="evidence" value="ECO:0007669"/>
    <property type="project" value="UniProtKB-EC"/>
</dbReference>
<dbReference type="GO" id="GO:0051539">
    <property type="term" value="F:4 iron, 4 sulfur cluster binding"/>
    <property type="evidence" value="ECO:0007669"/>
    <property type="project" value="UniProtKB-KW"/>
</dbReference>
<dbReference type="GO" id="GO:0046872">
    <property type="term" value="F:metal ion binding"/>
    <property type="evidence" value="ECO:0007669"/>
    <property type="project" value="UniProtKB-KW"/>
</dbReference>
<dbReference type="GO" id="GO:0009098">
    <property type="term" value="P:L-leucine biosynthetic process"/>
    <property type="evidence" value="ECO:0007669"/>
    <property type="project" value="UniProtKB-UniPathway"/>
</dbReference>
<dbReference type="CDD" id="cd01583">
    <property type="entry name" value="IPMI"/>
    <property type="match status" value="1"/>
</dbReference>
<dbReference type="Gene3D" id="3.30.499.10">
    <property type="entry name" value="Aconitase, domain 3"/>
    <property type="match status" value="2"/>
</dbReference>
<dbReference type="HAMAP" id="MF_01026">
    <property type="entry name" value="LeuC_type1"/>
    <property type="match status" value="1"/>
</dbReference>
<dbReference type="InterPro" id="IPR004430">
    <property type="entry name" value="3-IsopropMal_deHydase_lsu"/>
</dbReference>
<dbReference type="InterPro" id="IPR015931">
    <property type="entry name" value="Acnase/IPM_dHydase_lsu_aba_1/3"/>
</dbReference>
<dbReference type="InterPro" id="IPR001030">
    <property type="entry name" value="Acoase/IPM_deHydtase_lsu_aba"/>
</dbReference>
<dbReference type="InterPro" id="IPR018136">
    <property type="entry name" value="Aconitase_4Fe-4S_BS"/>
</dbReference>
<dbReference type="InterPro" id="IPR036008">
    <property type="entry name" value="Aconitase_4Fe-4S_dom"/>
</dbReference>
<dbReference type="InterPro" id="IPR050067">
    <property type="entry name" value="IPM_dehydratase_rel_enz"/>
</dbReference>
<dbReference type="InterPro" id="IPR033941">
    <property type="entry name" value="IPMI_cat"/>
</dbReference>
<dbReference type="NCBIfam" id="TIGR00170">
    <property type="entry name" value="leuC"/>
    <property type="match status" value="1"/>
</dbReference>
<dbReference type="NCBIfam" id="NF004016">
    <property type="entry name" value="PRK05478.1"/>
    <property type="match status" value="1"/>
</dbReference>
<dbReference type="NCBIfam" id="NF009116">
    <property type="entry name" value="PRK12466.1"/>
    <property type="match status" value="1"/>
</dbReference>
<dbReference type="PANTHER" id="PTHR43822:SF9">
    <property type="entry name" value="3-ISOPROPYLMALATE DEHYDRATASE"/>
    <property type="match status" value="1"/>
</dbReference>
<dbReference type="PANTHER" id="PTHR43822">
    <property type="entry name" value="HOMOACONITASE, MITOCHONDRIAL-RELATED"/>
    <property type="match status" value="1"/>
</dbReference>
<dbReference type="Pfam" id="PF00330">
    <property type="entry name" value="Aconitase"/>
    <property type="match status" value="1"/>
</dbReference>
<dbReference type="PRINTS" id="PR00415">
    <property type="entry name" value="ACONITASE"/>
</dbReference>
<dbReference type="SUPFAM" id="SSF53732">
    <property type="entry name" value="Aconitase iron-sulfur domain"/>
    <property type="match status" value="1"/>
</dbReference>
<dbReference type="PROSITE" id="PS00450">
    <property type="entry name" value="ACONITASE_1"/>
    <property type="match status" value="1"/>
</dbReference>
<dbReference type="PROSITE" id="PS01244">
    <property type="entry name" value="ACONITASE_2"/>
    <property type="match status" value="1"/>
</dbReference>
<evidence type="ECO:0000255" key="1">
    <source>
        <dbReference type="HAMAP-Rule" id="MF_01026"/>
    </source>
</evidence>
<evidence type="ECO:0000305" key="2"/>
<gene>
    <name evidence="1" type="primary">leuC</name>
</gene>
<protein>
    <recommendedName>
        <fullName evidence="1">3-isopropylmalate dehydratase large subunit</fullName>
        <ecNumber evidence="1">4.2.1.33</ecNumber>
    </recommendedName>
    <alternativeName>
        <fullName evidence="1">Alpha-IPM isomerase</fullName>
        <shortName evidence="1">IPMI</shortName>
    </alternativeName>
    <alternativeName>
        <fullName evidence="1">Isopropylmalate isomerase</fullName>
    </alternativeName>
</protein>
<proteinExistence type="inferred from homology"/>
<accession>Q9EVG8</accession>
<accession>Q99Q73</accession>
<accession>Q99QQ9</accession>
<accession>Q9AJ47</accession>
<accession>Q9AJ48</accession>
<accession>Q9AJ49</accession>
<accession>Q9AJ50</accession>
<accession>Q9AJ52</accession>
<reference key="1">
    <citation type="journal article" date="2001" name="J. Bacteriol.">
        <title>Vertical transmission of biosynthetic plasmids in aphid endosymbionts (Buchnera).</title>
        <authorList>
            <person name="Wernegreen J.J."/>
            <person name="Moran N.A."/>
        </authorList>
    </citation>
    <scope>NUCLEOTIDE SEQUENCE [GENOMIC DNA]</scope>
</reference>
<reference key="2">
    <citation type="journal article" date="2001" name="Genetics">
        <title>Intraspecific variation in symbiont genomes: bottlenecks and the aphid-Buchnera association.</title>
        <authorList>
            <person name="Funk D.J."/>
            <person name="Wernegreen J.J."/>
            <person name="Moran N.A."/>
        </authorList>
    </citation>
    <scope>NUCLEOTIDE SEQUENCE [GENOMIC DNA] OF 1-436</scope>
    <source>
        <strain>AL.012</strain>
        <strain>AZ.026</strain>
        <strain>AZ.180</strain>
        <strain>DC.005</strain>
        <strain>GA.039</strain>
        <strain>GA2181</strain>
        <strain>IL.014</strain>
        <strain>IL2.17</strain>
        <strain>IN.018</strain>
        <strain>KY.172</strain>
        <strain>KY2.37</strain>
        <strain>LA.013</strain>
        <strain>MI.035</strain>
        <strain>MN.001</strain>
        <strain>MNb027</strain>
        <strain>MS.040</strain>
        <strain>NY.016</strain>
        <strain>OH.036</strain>
        <strain>TN.173</strain>
        <strain>TN2.38</strain>
        <strain>UT.002</strain>
        <strain>VA.015</strain>
    </source>
</reference>
<keyword id="KW-0004">4Fe-4S</keyword>
<keyword id="KW-0028">Amino-acid biosynthesis</keyword>
<keyword id="KW-0100">Branched-chain amino acid biosynthesis</keyword>
<keyword id="KW-0408">Iron</keyword>
<keyword id="KW-0411">Iron-sulfur</keyword>
<keyword id="KW-0432">Leucine biosynthesis</keyword>
<keyword id="KW-0456">Lyase</keyword>
<keyword id="KW-0479">Metal-binding</keyword>
<keyword id="KW-0614">Plasmid</keyword>
<geneLocation type="plasmid">
    <name>pLeu</name>
    <name>pBAp1</name>
</geneLocation>
<sequence length="444" mass="49593">MTSKTLYQKIYDSHVVYEDKNGESILYIDLHLLHEVTSPQAFDALRSKKRKVRQSKKTFATMDHNVSTKIQSISASGSMAKKQMEQLIKNCRDFNIPLYDINNPNQGIVHVIAPEKGMTLPGMTIVCGDSHTSTHGAFGALAFGIGTSEVEHVLATQTLKQKRFKNMKVEIIGKIPKFVTAKDIILFIIGQLGSSSGTGYVIEFCGDVIKNISMEERMTICNMAIEMGAKSGLIAPDEITYKYLKDKIYSPSGLFWEKSLDYWKFLKSDKNAHFDKCITLDISNLAPQITWGTNPDQVISIDEKIPDYNNINSLLKKESAKSACEYMGLKSNTYLTNISIDRVFIGSCTNARIEDLRAASKILKNRKIAKHVKAIVVPGSGSVKRKAEQEGLDKIFIDSGFEWRLPGCSMCLGMNKDRLNFGERCASTSNRNFEGRQGRGGRTH</sequence>
<feature type="chain" id="PRO_0000076724" description="3-isopropylmalate dehydratase large subunit">
    <location>
        <begin position="1"/>
        <end position="444" status="greater than"/>
    </location>
</feature>
<feature type="binding site" evidence="1">
    <location>
        <position position="348"/>
    </location>
    <ligand>
        <name>[4Fe-4S] cluster</name>
        <dbReference type="ChEBI" id="CHEBI:49883"/>
    </ligand>
</feature>
<feature type="binding site" evidence="1">
    <location>
        <position position="408"/>
    </location>
    <ligand>
        <name>[4Fe-4S] cluster</name>
        <dbReference type="ChEBI" id="CHEBI:49883"/>
    </ligand>
</feature>
<feature type="binding site" evidence="1">
    <location>
        <position position="411"/>
    </location>
    <ligand>
        <name>[4Fe-4S] cluster</name>
        <dbReference type="ChEBI" id="CHEBI:49883"/>
    </ligand>
</feature>
<feature type="sequence variant" description="In strain: GA2181.">
    <original>GE</original>
    <variation>RG</variation>
    <location>
        <begin position="22"/>
        <end position="23"/>
    </location>
</feature>
<feature type="sequence variant" description="In strain: MNb027.">
    <original>S</original>
    <variation>N</variation>
    <location>
        <position position="47"/>
    </location>
</feature>
<feature type="sequence variant" description="In strain: UT.002.">
    <original>L</original>
    <variation>F</variation>
    <location>
        <position position="254"/>
    </location>
</feature>
<feature type="sequence variant" description="In strain: OH.036.">
    <original>N</original>
    <variation>K</variation>
    <location>
        <position position="312"/>
    </location>
</feature>
<feature type="sequence variant" description="In strain: GA2181, MNb027, OH.036 and UT.002.">
    <original>L</original>
    <variation>V</variation>
    <location>
        <position position="315"/>
    </location>
</feature>
<feature type="sequence variant" description="In strain: UT.002.">
    <original>S</original>
    <variation>A</variation>
    <location>
        <position position="339"/>
    </location>
</feature>
<feature type="sequence conflict" description="In Ref. 1; AAG31397." evidence="2" ref="1">
    <original>T</original>
    <variation>H</variation>
    <location>
        <position position="428"/>
    </location>
</feature>
<feature type="non-terminal residue">
    <location>
        <position position="444"/>
    </location>
</feature>
<organism>
    <name type="scientific">Buchnera aphidicola subsp. Uroleucon ambrosiae</name>
    <dbReference type="NCBI Taxonomy" id="118117"/>
    <lineage>
        <taxon>Bacteria</taxon>
        <taxon>Pseudomonadati</taxon>
        <taxon>Pseudomonadota</taxon>
        <taxon>Gammaproteobacteria</taxon>
        <taxon>Enterobacterales</taxon>
        <taxon>Erwiniaceae</taxon>
        <taxon>Buchnera</taxon>
    </lineage>
</organism>